<sequence length="288" mass="33952">MRLFEGAFQPWKLASTNLMQQCLLLNKKSQFHTTCILQGLKKQKANQRRKQNLKRREELRKQNLDTLADPIIGHSSEWIARLLKPYEILVERKKPNFPIRSIKFPASMETINLIVEKFEKIRASATEETKDFIKLNEVNEFPSSDTSLESNQDGFERLHPLAERLERMSQLSDLRKESIHRIFNIENSNSKTLRLNNKQLAVESFARNERDTGSPEVQAAVYTSRILALSDHCKNHKKDQTGKRMLRYYVHQRQRMLKYLRKVNFDRYVHCIKNLGLTDELVLREVTQ</sequence>
<feature type="transit peptide" description="Mitochondrion" evidence="2">
    <location>
        <begin position="1"/>
        <end position="50"/>
    </location>
</feature>
<feature type="chain" id="PRO_0000030612" description="Small ribosomal subunit protein uS15m">
    <location>
        <begin position="51"/>
        <end position="288"/>
    </location>
</feature>
<gene>
    <name type="primary">mrps28</name>
    <name type="ORF">pi007</name>
    <name type="ORF">SPBC11B10.04c</name>
</gene>
<proteinExistence type="inferred from homology"/>
<reference key="1">
    <citation type="journal article" date="2000" name="Yeast">
        <title>A 38 kb segment containing the cdc2 gene from the left arm of fission yeast chromosome II: sequence analysis and characterization of the genomic DNA and cDNAs encoded on the segment.</title>
        <authorList>
            <person name="Machida M."/>
            <person name="Yamazaki S."/>
            <person name="Kunihiro S."/>
            <person name="Tanaka T."/>
            <person name="Kushida N."/>
            <person name="Jinno K."/>
            <person name="Haikawa Y."/>
            <person name="Yamazaki J."/>
            <person name="Yamamoto S."/>
            <person name="Sekine M."/>
            <person name="Oguchi A."/>
            <person name="Nagai Y."/>
            <person name="Sakai M."/>
            <person name="Aoki K."/>
            <person name="Ogura K."/>
            <person name="Kudoh Y."/>
            <person name="Kikuchi H."/>
            <person name="Zhang M.Q."/>
            <person name="Yanagida M."/>
        </authorList>
    </citation>
    <scope>NUCLEOTIDE SEQUENCE [LARGE SCALE GENOMIC DNA]</scope>
    <source>
        <strain>972 / ATCC 24843</strain>
    </source>
</reference>
<reference key="2">
    <citation type="journal article" date="2002" name="Nature">
        <title>The genome sequence of Schizosaccharomyces pombe.</title>
        <authorList>
            <person name="Wood V."/>
            <person name="Gwilliam R."/>
            <person name="Rajandream M.A."/>
            <person name="Lyne M.H."/>
            <person name="Lyne R."/>
            <person name="Stewart A."/>
            <person name="Sgouros J.G."/>
            <person name="Peat N."/>
            <person name="Hayles J."/>
            <person name="Baker S.G."/>
            <person name="Basham D."/>
            <person name="Bowman S."/>
            <person name="Brooks K."/>
            <person name="Brown D."/>
            <person name="Brown S."/>
            <person name="Chillingworth T."/>
            <person name="Churcher C.M."/>
            <person name="Collins M."/>
            <person name="Connor R."/>
            <person name="Cronin A."/>
            <person name="Davis P."/>
            <person name="Feltwell T."/>
            <person name="Fraser A."/>
            <person name="Gentles S."/>
            <person name="Goble A."/>
            <person name="Hamlin N."/>
            <person name="Harris D.E."/>
            <person name="Hidalgo J."/>
            <person name="Hodgson G."/>
            <person name="Holroyd S."/>
            <person name="Hornsby T."/>
            <person name="Howarth S."/>
            <person name="Huckle E.J."/>
            <person name="Hunt S."/>
            <person name="Jagels K."/>
            <person name="James K.D."/>
            <person name="Jones L."/>
            <person name="Jones M."/>
            <person name="Leather S."/>
            <person name="McDonald S."/>
            <person name="McLean J."/>
            <person name="Mooney P."/>
            <person name="Moule S."/>
            <person name="Mungall K.L."/>
            <person name="Murphy L.D."/>
            <person name="Niblett D."/>
            <person name="Odell C."/>
            <person name="Oliver K."/>
            <person name="O'Neil S."/>
            <person name="Pearson D."/>
            <person name="Quail M.A."/>
            <person name="Rabbinowitsch E."/>
            <person name="Rutherford K.M."/>
            <person name="Rutter S."/>
            <person name="Saunders D."/>
            <person name="Seeger K."/>
            <person name="Sharp S."/>
            <person name="Skelton J."/>
            <person name="Simmonds M.N."/>
            <person name="Squares R."/>
            <person name="Squares S."/>
            <person name="Stevens K."/>
            <person name="Taylor K."/>
            <person name="Taylor R.G."/>
            <person name="Tivey A."/>
            <person name="Walsh S.V."/>
            <person name="Warren T."/>
            <person name="Whitehead S."/>
            <person name="Woodward J.R."/>
            <person name="Volckaert G."/>
            <person name="Aert R."/>
            <person name="Robben J."/>
            <person name="Grymonprez B."/>
            <person name="Weltjens I."/>
            <person name="Vanstreels E."/>
            <person name="Rieger M."/>
            <person name="Schaefer M."/>
            <person name="Mueller-Auer S."/>
            <person name="Gabel C."/>
            <person name="Fuchs M."/>
            <person name="Duesterhoeft A."/>
            <person name="Fritzc C."/>
            <person name="Holzer E."/>
            <person name="Moestl D."/>
            <person name="Hilbert H."/>
            <person name="Borzym K."/>
            <person name="Langer I."/>
            <person name="Beck A."/>
            <person name="Lehrach H."/>
            <person name="Reinhardt R."/>
            <person name="Pohl T.M."/>
            <person name="Eger P."/>
            <person name="Zimmermann W."/>
            <person name="Wedler H."/>
            <person name="Wambutt R."/>
            <person name="Purnelle B."/>
            <person name="Goffeau A."/>
            <person name="Cadieu E."/>
            <person name="Dreano S."/>
            <person name="Gloux S."/>
            <person name="Lelaure V."/>
            <person name="Mottier S."/>
            <person name="Galibert F."/>
            <person name="Aves S.J."/>
            <person name="Xiang Z."/>
            <person name="Hunt C."/>
            <person name="Moore K."/>
            <person name="Hurst S.M."/>
            <person name="Lucas M."/>
            <person name="Rochet M."/>
            <person name="Gaillardin C."/>
            <person name="Tallada V.A."/>
            <person name="Garzon A."/>
            <person name="Thode G."/>
            <person name="Daga R.R."/>
            <person name="Cruzado L."/>
            <person name="Jimenez J."/>
            <person name="Sanchez M."/>
            <person name="del Rey F."/>
            <person name="Benito J."/>
            <person name="Dominguez A."/>
            <person name="Revuelta J.L."/>
            <person name="Moreno S."/>
            <person name="Armstrong J."/>
            <person name="Forsburg S.L."/>
            <person name="Cerutti L."/>
            <person name="Lowe T."/>
            <person name="McCombie W.R."/>
            <person name="Paulsen I."/>
            <person name="Potashkin J."/>
            <person name="Shpakovski G.V."/>
            <person name="Ussery D."/>
            <person name="Barrell B.G."/>
            <person name="Nurse P."/>
        </authorList>
    </citation>
    <scope>NUCLEOTIDE SEQUENCE [LARGE SCALE GENOMIC DNA]</scope>
    <source>
        <strain>972 / ATCC 24843</strain>
    </source>
</reference>
<reference key="3">
    <citation type="journal article" date="2006" name="Nat. Biotechnol.">
        <title>ORFeome cloning and global analysis of protein localization in the fission yeast Schizosaccharomyces pombe.</title>
        <authorList>
            <person name="Matsuyama A."/>
            <person name="Arai R."/>
            <person name="Yashiroda Y."/>
            <person name="Shirai A."/>
            <person name="Kamata A."/>
            <person name="Sekido S."/>
            <person name="Kobayashi Y."/>
            <person name="Hashimoto A."/>
            <person name="Hamamoto M."/>
            <person name="Hiraoka Y."/>
            <person name="Horinouchi S."/>
            <person name="Yoshida M."/>
        </authorList>
    </citation>
    <scope>SUBCELLULAR LOCATION [LARGE SCALE ANALYSIS]</scope>
</reference>
<organism>
    <name type="scientific">Schizosaccharomyces pombe (strain 972 / ATCC 24843)</name>
    <name type="common">Fission yeast</name>
    <dbReference type="NCBI Taxonomy" id="284812"/>
    <lineage>
        <taxon>Eukaryota</taxon>
        <taxon>Fungi</taxon>
        <taxon>Dikarya</taxon>
        <taxon>Ascomycota</taxon>
        <taxon>Taphrinomycotina</taxon>
        <taxon>Schizosaccharomycetes</taxon>
        <taxon>Schizosaccharomycetales</taxon>
        <taxon>Schizosaccharomycetaceae</taxon>
        <taxon>Schizosaccharomyces</taxon>
    </lineage>
</organism>
<evidence type="ECO:0000250" key="1">
    <source>
        <dbReference type="UniProtKB" id="P21771"/>
    </source>
</evidence>
<evidence type="ECO:0000255" key="2"/>
<evidence type="ECO:0000269" key="3">
    <source>
    </source>
</evidence>
<evidence type="ECO:0000305" key="4"/>
<keyword id="KW-0496">Mitochondrion</keyword>
<keyword id="KW-1185">Reference proteome</keyword>
<keyword id="KW-0687">Ribonucleoprotein</keyword>
<keyword id="KW-0689">Ribosomal protein</keyword>
<keyword id="KW-0694">RNA-binding</keyword>
<keyword id="KW-0699">rRNA-binding</keyword>
<keyword id="KW-0809">Transit peptide</keyword>
<name>RT28_SCHPO</name>
<accession>O13602</accession>
<protein>
    <recommendedName>
        <fullName evidence="4">Small ribosomal subunit protein uS15m</fullName>
    </recommendedName>
    <alternativeName>
        <fullName>37S ribosomal protein S28, mitochondrial</fullName>
    </alternativeName>
</protein>
<comment type="function">
    <text evidence="1">Component of the mitochondrial ribosome (mitoribosome), a dedicated translation machinery responsible for the synthesis of mitochondrial genome-encoded proteins, including at least some of the essential transmembrane subunits of the mitochondrial respiratory chain. The mitoribosomes are attached to the mitochondrial inner membrane and translation products are cotranslationally integrated into the membrane.</text>
</comment>
<comment type="subunit">
    <text evidence="1">Component of the mitochondrial small ribosomal subunit (mt-SSU). Mature yeast 74S mitochondrial ribosomes consist of a small (37S) and a large (54S) subunit. The 37S small subunit contains a 15S ribosomal RNA (15S mt-rRNA) and at least 32 different proteins. The 54S large subunit contains a 21S rRNA (21S mt-rRNA) and at least 45 different proteins.</text>
</comment>
<comment type="subcellular location">
    <subcellularLocation>
        <location evidence="3">Mitochondrion</location>
    </subcellularLocation>
</comment>
<comment type="similarity">
    <text evidence="4">Belongs to the universal ribosomal protein uS15 family.</text>
</comment>
<dbReference type="EMBL" id="AB004534">
    <property type="protein sequence ID" value="BAA21384.1"/>
    <property type="molecule type" value="Genomic_DNA"/>
</dbReference>
<dbReference type="EMBL" id="CU329671">
    <property type="protein sequence ID" value="CAC37508.1"/>
    <property type="molecule type" value="Genomic_DNA"/>
</dbReference>
<dbReference type="RefSeq" id="NP_595624.1">
    <property type="nucleotide sequence ID" value="NM_001021518.2"/>
</dbReference>
<dbReference type="SMR" id="O13602"/>
<dbReference type="BioGRID" id="276506">
    <property type="interactions" value="14"/>
</dbReference>
<dbReference type="ComplexPortal" id="CPX-10315">
    <property type="entry name" value="37S mitochondrial small ribosomal subunit"/>
</dbReference>
<dbReference type="FunCoup" id="O13602">
    <property type="interactions" value="198"/>
</dbReference>
<dbReference type="STRING" id="284812.O13602"/>
<dbReference type="PaxDb" id="4896-SPBC11B10.04c.1"/>
<dbReference type="EnsemblFungi" id="SPBC11B10.04c.1">
    <property type="protein sequence ID" value="SPBC11B10.04c.1:pep"/>
    <property type="gene ID" value="SPBC11B10.04c"/>
</dbReference>
<dbReference type="GeneID" id="2539962"/>
<dbReference type="KEGG" id="spo:2539962"/>
<dbReference type="PomBase" id="SPBC11B10.04c">
    <property type="gene designation" value="mrps28"/>
</dbReference>
<dbReference type="VEuPathDB" id="FungiDB:SPBC11B10.04c"/>
<dbReference type="eggNOG" id="KOG2815">
    <property type="taxonomic scope" value="Eukaryota"/>
</dbReference>
<dbReference type="HOGENOM" id="CLU_877508_0_0_1"/>
<dbReference type="InParanoid" id="O13602"/>
<dbReference type="OMA" id="NMSQIND"/>
<dbReference type="PhylomeDB" id="O13602"/>
<dbReference type="PRO" id="PR:O13602"/>
<dbReference type="Proteomes" id="UP000002485">
    <property type="component" value="Chromosome II"/>
</dbReference>
<dbReference type="GO" id="GO:0005763">
    <property type="term" value="C:mitochondrial small ribosomal subunit"/>
    <property type="evidence" value="ECO:0000250"/>
    <property type="project" value="PomBase"/>
</dbReference>
<dbReference type="GO" id="GO:0005739">
    <property type="term" value="C:mitochondrion"/>
    <property type="evidence" value="ECO:0007005"/>
    <property type="project" value="PomBase"/>
</dbReference>
<dbReference type="GO" id="GO:0019843">
    <property type="term" value="F:rRNA binding"/>
    <property type="evidence" value="ECO:0007669"/>
    <property type="project" value="UniProtKB-KW"/>
</dbReference>
<dbReference type="GO" id="GO:0003735">
    <property type="term" value="F:structural constituent of ribosome"/>
    <property type="evidence" value="ECO:0000250"/>
    <property type="project" value="PomBase"/>
</dbReference>
<dbReference type="GO" id="GO:0032543">
    <property type="term" value="P:mitochondrial translation"/>
    <property type="evidence" value="ECO:0000250"/>
    <property type="project" value="PomBase"/>
</dbReference>
<dbReference type="CDD" id="cd00353">
    <property type="entry name" value="Ribosomal_S15p_S13e"/>
    <property type="match status" value="1"/>
</dbReference>
<dbReference type="Gene3D" id="1.10.287.10">
    <property type="entry name" value="S15/NS1, RNA-binding"/>
    <property type="match status" value="1"/>
</dbReference>
<dbReference type="HAMAP" id="MF_01343_B">
    <property type="entry name" value="Ribosomal_uS15_B"/>
    <property type="match status" value="1"/>
</dbReference>
<dbReference type="InterPro" id="IPR000589">
    <property type="entry name" value="Ribosomal_uS15"/>
</dbReference>
<dbReference type="InterPro" id="IPR005290">
    <property type="entry name" value="Ribosomal_uS15_bac-type"/>
</dbReference>
<dbReference type="InterPro" id="IPR009068">
    <property type="entry name" value="uS15_NS1_RNA-bd_sf"/>
</dbReference>
<dbReference type="NCBIfam" id="TIGR00952">
    <property type="entry name" value="S15_bact"/>
    <property type="match status" value="1"/>
</dbReference>
<dbReference type="PANTHER" id="PTHR23321">
    <property type="entry name" value="RIBOSOMAL PROTEIN S15, BACTERIAL AND ORGANELLAR"/>
    <property type="match status" value="1"/>
</dbReference>
<dbReference type="PANTHER" id="PTHR23321:SF26">
    <property type="entry name" value="SMALL RIBOSOMAL SUBUNIT PROTEIN US15M"/>
    <property type="match status" value="1"/>
</dbReference>
<dbReference type="Pfam" id="PF00312">
    <property type="entry name" value="Ribosomal_S15"/>
    <property type="match status" value="1"/>
</dbReference>
<dbReference type="SMART" id="SM01387">
    <property type="entry name" value="Ribosomal_S15"/>
    <property type="match status" value="1"/>
</dbReference>
<dbReference type="SUPFAM" id="SSF47060">
    <property type="entry name" value="S15/NS1 RNA-binding domain"/>
    <property type="match status" value="1"/>
</dbReference>